<proteinExistence type="inferred from homology"/>
<organism>
    <name type="scientific">Bordetella parapertussis (strain 12822 / ATCC BAA-587 / NCTC 13253)</name>
    <dbReference type="NCBI Taxonomy" id="257311"/>
    <lineage>
        <taxon>Bacteria</taxon>
        <taxon>Pseudomonadati</taxon>
        <taxon>Pseudomonadota</taxon>
        <taxon>Betaproteobacteria</taxon>
        <taxon>Burkholderiales</taxon>
        <taxon>Alcaligenaceae</taxon>
        <taxon>Bordetella</taxon>
    </lineage>
</organism>
<gene>
    <name evidence="1" type="primary">rsgA</name>
    <name type="ordered locus">BPP1668</name>
</gene>
<accession>P67680</accession>
<accession>Q7VVH5</accession>
<accession>Q7W9T6</accession>
<accession>Q7WGX1</accession>
<dbReference type="EC" id="3.6.1.-" evidence="1"/>
<dbReference type="EMBL" id="BX640428">
    <property type="protein sequence ID" value="CAE36969.1"/>
    <property type="molecule type" value="Genomic_DNA"/>
</dbReference>
<dbReference type="RefSeq" id="WP_003813309.1">
    <property type="nucleotide sequence ID" value="NC_002928.3"/>
</dbReference>
<dbReference type="SMR" id="P67680"/>
<dbReference type="GeneID" id="93203427"/>
<dbReference type="KEGG" id="bpa:BPP1668"/>
<dbReference type="HOGENOM" id="CLU_033617_2_0_4"/>
<dbReference type="Proteomes" id="UP000001421">
    <property type="component" value="Chromosome"/>
</dbReference>
<dbReference type="GO" id="GO:0005737">
    <property type="term" value="C:cytoplasm"/>
    <property type="evidence" value="ECO:0007669"/>
    <property type="project" value="UniProtKB-SubCell"/>
</dbReference>
<dbReference type="GO" id="GO:0005525">
    <property type="term" value="F:GTP binding"/>
    <property type="evidence" value="ECO:0007669"/>
    <property type="project" value="UniProtKB-UniRule"/>
</dbReference>
<dbReference type="GO" id="GO:0003924">
    <property type="term" value="F:GTPase activity"/>
    <property type="evidence" value="ECO:0007669"/>
    <property type="project" value="UniProtKB-UniRule"/>
</dbReference>
<dbReference type="GO" id="GO:0046872">
    <property type="term" value="F:metal ion binding"/>
    <property type="evidence" value="ECO:0007669"/>
    <property type="project" value="UniProtKB-KW"/>
</dbReference>
<dbReference type="GO" id="GO:0019843">
    <property type="term" value="F:rRNA binding"/>
    <property type="evidence" value="ECO:0007669"/>
    <property type="project" value="UniProtKB-KW"/>
</dbReference>
<dbReference type="GO" id="GO:0042274">
    <property type="term" value="P:ribosomal small subunit biogenesis"/>
    <property type="evidence" value="ECO:0007669"/>
    <property type="project" value="UniProtKB-UniRule"/>
</dbReference>
<dbReference type="CDD" id="cd04466">
    <property type="entry name" value="S1_YloQ_GTPase"/>
    <property type="match status" value="1"/>
</dbReference>
<dbReference type="CDD" id="cd01854">
    <property type="entry name" value="YjeQ_EngC"/>
    <property type="match status" value="1"/>
</dbReference>
<dbReference type="Gene3D" id="2.40.50.140">
    <property type="entry name" value="Nucleic acid-binding proteins"/>
    <property type="match status" value="1"/>
</dbReference>
<dbReference type="Gene3D" id="3.40.50.300">
    <property type="entry name" value="P-loop containing nucleotide triphosphate hydrolases"/>
    <property type="match status" value="1"/>
</dbReference>
<dbReference type="Gene3D" id="1.10.40.50">
    <property type="entry name" value="Probable gtpase engc, domain 3"/>
    <property type="match status" value="1"/>
</dbReference>
<dbReference type="HAMAP" id="MF_01820">
    <property type="entry name" value="GTPase_RsgA"/>
    <property type="match status" value="1"/>
</dbReference>
<dbReference type="InterPro" id="IPR030378">
    <property type="entry name" value="G_CP_dom"/>
</dbReference>
<dbReference type="InterPro" id="IPR012340">
    <property type="entry name" value="NA-bd_OB-fold"/>
</dbReference>
<dbReference type="InterPro" id="IPR027417">
    <property type="entry name" value="P-loop_NTPase"/>
</dbReference>
<dbReference type="InterPro" id="IPR004881">
    <property type="entry name" value="Ribosome_biogen_GTPase_RsgA"/>
</dbReference>
<dbReference type="InterPro" id="IPR010914">
    <property type="entry name" value="RsgA_GTPase_dom"/>
</dbReference>
<dbReference type="InterPro" id="IPR031944">
    <property type="entry name" value="RsgA_N"/>
</dbReference>
<dbReference type="NCBIfam" id="TIGR00157">
    <property type="entry name" value="ribosome small subunit-dependent GTPase A"/>
    <property type="match status" value="1"/>
</dbReference>
<dbReference type="PANTHER" id="PTHR32120">
    <property type="entry name" value="SMALL RIBOSOMAL SUBUNIT BIOGENESIS GTPASE RSGA"/>
    <property type="match status" value="1"/>
</dbReference>
<dbReference type="PANTHER" id="PTHR32120:SF11">
    <property type="entry name" value="SMALL RIBOSOMAL SUBUNIT BIOGENESIS GTPASE RSGA 1, MITOCHONDRIAL-RELATED"/>
    <property type="match status" value="1"/>
</dbReference>
<dbReference type="Pfam" id="PF03193">
    <property type="entry name" value="RsgA_GTPase"/>
    <property type="match status" value="1"/>
</dbReference>
<dbReference type="SUPFAM" id="SSF50249">
    <property type="entry name" value="Nucleic acid-binding proteins"/>
    <property type="match status" value="1"/>
</dbReference>
<dbReference type="SUPFAM" id="SSF52540">
    <property type="entry name" value="P-loop containing nucleoside triphosphate hydrolases"/>
    <property type="match status" value="1"/>
</dbReference>
<dbReference type="PROSITE" id="PS50936">
    <property type="entry name" value="ENGC_GTPASE"/>
    <property type="match status" value="1"/>
</dbReference>
<dbReference type="PROSITE" id="PS51721">
    <property type="entry name" value="G_CP"/>
    <property type="match status" value="1"/>
</dbReference>
<feature type="chain" id="PRO_0000171470" description="Small ribosomal subunit biogenesis GTPase RsgA">
    <location>
        <begin position="1"/>
        <end position="300"/>
    </location>
</feature>
<feature type="domain" description="CP-type G" evidence="2">
    <location>
        <begin position="69"/>
        <end position="231"/>
    </location>
</feature>
<feature type="binding site" evidence="1">
    <location>
        <begin position="119"/>
        <end position="122"/>
    </location>
    <ligand>
        <name>GTP</name>
        <dbReference type="ChEBI" id="CHEBI:37565"/>
    </ligand>
</feature>
<feature type="binding site" evidence="1">
    <location>
        <begin position="172"/>
        <end position="180"/>
    </location>
    <ligand>
        <name>GTP</name>
        <dbReference type="ChEBI" id="CHEBI:37565"/>
    </ligand>
</feature>
<feature type="binding site" evidence="1">
    <location>
        <position position="255"/>
    </location>
    <ligand>
        <name>Zn(2+)</name>
        <dbReference type="ChEBI" id="CHEBI:29105"/>
    </ligand>
</feature>
<feature type="binding site" evidence="1">
    <location>
        <position position="260"/>
    </location>
    <ligand>
        <name>Zn(2+)</name>
        <dbReference type="ChEBI" id="CHEBI:29105"/>
    </ligand>
</feature>
<feature type="binding site" evidence="1">
    <location>
        <position position="262"/>
    </location>
    <ligand>
        <name>Zn(2+)</name>
        <dbReference type="ChEBI" id="CHEBI:29105"/>
    </ligand>
</feature>
<feature type="binding site" evidence="1">
    <location>
        <position position="268"/>
    </location>
    <ligand>
        <name>Zn(2+)</name>
        <dbReference type="ChEBI" id="CHEBI:29105"/>
    </ligand>
</feature>
<evidence type="ECO:0000255" key="1">
    <source>
        <dbReference type="HAMAP-Rule" id="MF_01820"/>
    </source>
</evidence>
<evidence type="ECO:0000255" key="2">
    <source>
        <dbReference type="PROSITE-ProRule" id="PRU01058"/>
    </source>
</evidence>
<protein>
    <recommendedName>
        <fullName evidence="1">Small ribosomal subunit biogenesis GTPase RsgA</fullName>
        <ecNumber evidence="1">3.6.1.-</ecNumber>
    </recommendedName>
</protein>
<name>RSGA_BORPA</name>
<comment type="function">
    <text evidence="1">One of several proteins that assist in the late maturation steps of the functional core of the 30S ribosomal subunit. Helps release RbfA from mature subunits. May play a role in the assembly of ribosomal proteins into the subunit. Circularly permuted GTPase that catalyzes slow GTP hydrolysis, GTPase activity is stimulated by the 30S ribosomal subunit.</text>
</comment>
<comment type="cofactor">
    <cofactor evidence="1">
        <name>Zn(2+)</name>
        <dbReference type="ChEBI" id="CHEBI:29105"/>
    </cofactor>
    <text evidence="1">Binds 1 zinc ion per subunit.</text>
</comment>
<comment type="subunit">
    <text evidence="1">Monomer. Associates with 30S ribosomal subunit, binds 16S rRNA.</text>
</comment>
<comment type="subcellular location">
    <subcellularLocation>
        <location evidence="1">Cytoplasm</location>
    </subcellularLocation>
</comment>
<comment type="similarity">
    <text evidence="1">Belongs to the TRAFAC class YlqF/YawG GTPase family. RsgA subfamily.</text>
</comment>
<keyword id="KW-0963">Cytoplasm</keyword>
<keyword id="KW-0342">GTP-binding</keyword>
<keyword id="KW-0378">Hydrolase</keyword>
<keyword id="KW-0479">Metal-binding</keyword>
<keyword id="KW-0547">Nucleotide-binding</keyword>
<keyword id="KW-0690">Ribosome biogenesis</keyword>
<keyword id="KW-0694">RNA-binding</keyword>
<keyword id="KW-0699">rRNA-binding</keyword>
<keyword id="KW-0862">Zinc</keyword>
<reference key="1">
    <citation type="journal article" date="2003" name="Nat. Genet.">
        <title>Comparative analysis of the genome sequences of Bordetella pertussis, Bordetella parapertussis and Bordetella bronchiseptica.</title>
        <authorList>
            <person name="Parkhill J."/>
            <person name="Sebaihia M."/>
            <person name="Preston A."/>
            <person name="Murphy L.D."/>
            <person name="Thomson N.R."/>
            <person name="Harris D.E."/>
            <person name="Holden M.T.G."/>
            <person name="Churcher C.M."/>
            <person name="Bentley S.D."/>
            <person name="Mungall K.L."/>
            <person name="Cerdeno-Tarraga A.-M."/>
            <person name="Temple L."/>
            <person name="James K.D."/>
            <person name="Harris B."/>
            <person name="Quail M.A."/>
            <person name="Achtman M."/>
            <person name="Atkin R."/>
            <person name="Baker S."/>
            <person name="Basham D."/>
            <person name="Bason N."/>
            <person name="Cherevach I."/>
            <person name="Chillingworth T."/>
            <person name="Collins M."/>
            <person name="Cronin A."/>
            <person name="Davis P."/>
            <person name="Doggett J."/>
            <person name="Feltwell T."/>
            <person name="Goble A."/>
            <person name="Hamlin N."/>
            <person name="Hauser H."/>
            <person name="Holroyd S."/>
            <person name="Jagels K."/>
            <person name="Leather S."/>
            <person name="Moule S."/>
            <person name="Norberczak H."/>
            <person name="O'Neil S."/>
            <person name="Ormond D."/>
            <person name="Price C."/>
            <person name="Rabbinowitsch E."/>
            <person name="Rutter S."/>
            <person name="Sanders M."/>
            <person name="Saunders D."/>
            <person name="Seeger K."/>
            <person name="Sharp S."/>
            <person name="Simmonds M."/>
            <person name="Skelton J."/>
            <person name="Squares R."/>
            <person name="Squares S."/>
            <person name="Stevens K."/>
            <person name="Unwin L."/>
            <person name="Whitehead S."/>
            <person name="Barrell B.G."/>
            <person name="Maskell D.J."/>
        </authorList>
    </citation>
    <scope>NUCLEOTIDE SEQUENCE [LARGE SCALE GENOMIC DNA]</scope>
    <source>
        <strain>12822 / ATCC BAA-587 / NCTC 13253</strain>
    </source>
</reference>
<sequence length="300" mass="32737">MSSNQAEGLIIAAHGRHYTVELADGSLRQCFPRGKKNGPAVGDRVRITPQGRDEGAIEAVLPRRNLLFRSDEMRVKQFAANVDQLLIVVAVEPTFADDLTGRSLAGAWSADIEPVIVLNKIDLPNGLDAARARLEPLRRLGVPVIELSAQDHAMVHERLAPRLAGRTSLLLGQSGMGKSTLLNTLVPHAQAATREYSAALDMGRHTTTSTRLYHLPEPGGDLIDSPGFQAFGLQHLNGEQILRGFPEFAPHIEHCRFYNCTHRHEPGCGVLAALQAGQIDAGRYALYLRILDENAAARPY</sequence>